<proteinExistence type="evidence at protein level"/>
<keyword id="KW-0002">3D-structure</keyword>
<keyword id="KW-0025">Alternative splicing</keyword>
<keyword id="KW-0967">Endosome</keyword>
<keyword id="KW-0472">Membrane</keyword>
<keyword id="KW-0597">Phosphoprotein</keyword>
<keyword id="KW-0653">Protein transport</keyword>
<keyword id="KW-1267">Proteomics identification</keyword>
<keyword id="KW-1185">Reference proteome</keyword>
<keyword id="KW-0813">Transport</keyword>
<organism>
    <name type="scientific">Homo sapiens</name>
    <name type="common">Human</name>
    <dbReference type="NCBI Taxonomy" id="9606"/>
    <lineage>
        <taxon>Eukaryota</taxon>
        <taxon>Metazoa</taxon>
        <taxon>Chordata</taxon>
        <taxon>Craniata</taxon>
        <taxon>Vertebrata</taxon>
        <taxon>Euteleostomi</taxon>
        <taxon>Mammalia</taxon>
        <taxon>Eutheria</taxon>
        <taxon>Euarchontoglires</taxon>
        <taxon>Primates</taxon>
        <taxon>Haplorrhini</taxon>
        <taxon>Catarrhini</taxon>
        <taxon>Hominidae</taxon>
        <taxon>Homo</taxon>
    </lineage>
</organism>
<accession>Q9H7P6</accession>
<accession>Q8N6S7</accession>
<feature type="chain" id="PRO_0000249074" description="Multivesicular body subunit 12B">
    <location>
        <begin position="1"/>
        <end position="319"/>
    </location>
</feature>
<feature type="domain" description="MABP" evidence="3">
    <location>
        <begin position="47"/>
        <end position="193"/>
    </location>
</feature>
<feature type="domain" description="UMA" evidence="2">
    <location>
        <begin position="254"/>
        <end position="303"/>
    </location>
</feature>
<feature type="region of interest" description="Disordered" evidence="4">
    <location>
        <begin position="1"/>
        <end position="50"/>
    </location>
</feature>
<feature type="region of interest" description="Disordered" evidence="4">
    <location>
        <begin position="195"/>
        <end position="222"/>
    </location>
</feature>
<feature type="region of interest" description="Disordered" evidence="4">
    <location>
        <begin position="299"/>
        <end position="319"/>
    </location>
</feature>
<feature type="compositionally biased region" description="Pro residues" evidence="4">
    <location>
        <begin position="13"/>
        <end position="24"/>
    </location>
</feature>
<feature type="compositionally biased region" description="Low complexity" evidence="4">
    <location>
        <begin position="200"/>
        <end position="216"/>
    </location>
</feature>
<feature type="modified residue" description="Phosphoserine" evidence="5">
    <location>
        <position position="46"/>
    </location>
</feature>
<feature type="modified residue" description="Phosphoserine" evidence="5">
    <location>
        <position position="101"/>
    </location>
</feature>
<feature type="modified residue" description="Phosphothreonine" evidence="5">
    <location>
        <position position="122"/>
    </location>
</feature>
<feature type="modified residue" description="Phosphothreonine" evidence="5">
    <location>
        <position position="204"/>
    </location>
</feature>
<feature type="modified residue" description="Phosphothreonine" evidence="5">
    <location>
        <position position="205"/>
    </location>
</feature>
<feature type="modified residue" description="Phosphoserine" evidence="1">
    <location>
        <position position="224"/>
    </location>
</feature>
<feature type="modified residue" description="Phosphoserine" evidence="5">
    <location>
        <position position="309"/>
    </location>
</feature>
<feature type="splice variant" id="VSP_020364" description="In isoform 2." evidence="6">
    <location>
        <begin position="222"/>
        <end position="319"/>
    </location>
</feature>
<feature type="strand" evidence="8">
    <location>
        <begin position="52"/>
        <end position="58"/>
    </location>
</feature>
<feature type="strand" evidence="8">
    <location>
        <begin position="93"/>
        <end position="97"/>
    </location>
</feature>
<feature type="helix" evidence="8">
    <location>
        <begin position="105"/>
        <end position="107"/>
    </location>
</feature>
<feature type="strand" evidence="8">
    <location>
        <begin position="109"/>
        <end position="118"/>
    </location>
</feature>
<feature type="turn" evidence="8">
    <location>
        <begin position="134"/>
        <end position="136"/>
    </location>
</feature>
<feature type="strand" evidence="8">
    <location>
        <begin position="142"/>
        <end position="152"/>
    </location>
</feature>
<feature type="helix" evidence="8">
    <location>
        <begin position="153"/>
        <end position="155"/>
    </location>
</feature>
<feature type="strand" evidence="8">
    <location>
        <begin position="159"/>
        <end position="167"/>
    </location>
</feature>
<feature type="strand" evidence="8">
    <location>
        <begin position="176"/>
        <end position="182"/>
    </location>
</feature>
<feature type="strand" evidence="8">
    <location>
        <begin position="185"/>
        <end position="192"/>
    </location>
</feature>
<comment type="function">
    <text>Component of the ESCRT-I complex, a regulator of vesicular trafficking process. Required for the sorting of endocytic ubiquitinated cargos into multivesicular bodies.</text>
</comment>
<comment type="subunit">
    <text evidence="5">Component of the ESCRT-I complex (endosomal sorting complex required for transport I) which consists of TSG101, VPS28, a VPS37 protein (VPS37A to -D) and MVB12A or MVB12B in a 1:1:1:1 stoichiometry. Interacts with TSG101; the association appears to be mediated by the TSG101-VPS37 binary subcomplex. Interacts with VPS28. Interacts with VPS37B; the association appears to be mediated by the TSG101-VPS37 binary subcomplex. Interacts with VPS37C; the association appears to be mediated by the TSG101-VPS37 binary subcomplex.</text>
</comment>
<comment type="interaction">
    <interactant intactId="EBI-6149062">
        <id>Q9H7P6</id>
    </interactant>
    <interactant intactId="EBI-739832">
        <id>Q8TBB1</id>
        <label>LNX1</label>
    </interactant>
    <organismsDiffer>false</organismsDiffer>
    <experiments>3</experiments>
</comment>
<comment type="interaction">
    <interactant intactId="EBI-6149062">
        <id>Q9H7P6</id>
    </interactant>
    <interactant intactId="EBI-10742528">
        <id>A6NJ78</id>
        <label>METTL15</label>
    </interactant>
    <organismsDiffer>false</organismsDiffer>
    <experiments>2</experiments>
</comment>
<comment type="subcellular location">
    <subcellularLocation>
        <location evidence="7">Endosome</location>
    </subcellularLocation>
    <subcellularLocation>
        <location evidence="7">Late endosome membrane</location>
        <topology evidence="7">Peripheral membrane protein</topology>
    </subcellularLocation>
</comment>
<comment type="alternative products">
    <event type="alternative splicing"/>
    <isoform>
        <id>Q9H7P6-1</id>
        <name>1</name>
        <sequence type="displayed"/>
    </isoform>
    <isoform>
        <id>Q9H7P6-2</id>
        <name>2</name>
        <sequence type="described" ref="VSP_020364"/>
    </isoform>
</comment>
<comment type="similarity">
    <text evidence="7">Belongs to the MVB12 family.</text>
</comment>
<comment type="sequence caution" evidence="7">
    <conflict type="erroneous initiation">
        <sequence resource="EMBL-CDS" id="BAB15722"/>
    </conflict>
</comment>
<sequence length="319" mass="35620">MRSCFCVRRSRDPPPPQPPPPPPQRGTDQSTMPEVKDLSEALPETSMDPITGVGVVASRNRAPTGYDVVAQTADGVDADLWKDGLFKSKVTRYLCFTRSFSKENSHLGNVLVDMKLIDIKDTLPVGFIPIQETVDTQEVAFRKKRLCIKFIPRDSTEAAICDIRIMGRTKQAPPQYTFIGELNSMGIWYRMGRVPRNHDSSQPTTPSQSSAASTPAPNLPRHISLTLPATFRGRNSTRTDYEYQHSNLYAISAMDGVPFMISEKFSCVPESMQPFDLLGITIKSLAEIEKEYEYSFRTEQSAAARLPPSPTRCQQIPQS</sequence>
<name>MB12B_HUMAN</name>
<evidence type="ECO:0000250" key="1">
    <source>
        <dbReference type="UniProtKB" id="Q6KAU4"/>
    </source>
</evidence>
<evidence type="ECO:0000255" key="2">
    <source>
        <dbReference type="PROSITE-ProRule" id="PRU00830"/>
    </source>
</evidence>
<evidence type="ECO:0000255" key="3">
    <source>
        <dbReference type="PROSITE-ProRule" id="PRU00831"/>
    </source>
</evidence>
<evidence type="ECO:0000256" key="4">
    <source>
        <dbReference type="SAM" id="MobiDB-lite"/>
    </source>
</evidence>
<evidence type="ECO:0000269" key="5">
    <source>
    </source>
</evidence>
<evidence type="ECO:0000303" key="6">
    <source>
    </source>
</evidence>
<evidence type="ECO:0000305" key="7"/>
<evidence type="ECO:0007829" key="8">
    <source>
        <dbReference type="PDB" id="3TOW"/>
    </source>
</evidence>
<reference key="1">
    <citation type="journal article" date="2004" name="Nat. Genet.">
        <title>Complete sequencing and characterization of 21,243 full-length human cDNAs.</title>
        <authorList>
            <person name="Ota T."/>
            <person name="Suzuki Y."/>
            <person name="Nishikawa T."/>
            <person name="Otsuki T."/>
            <person name="Sugiyama T."/>
            <person name="Irie R."/>
            <person name="Wakamatsu A."/>
            <person name="Hayashi K."/>
            <person name="Sato H."/>
            <person name="Nagai K."/>
            <person name="Kimura K."/>
            <person name="Makita H."/>
            <person name="Sekine M."/>
            <person name="Obayashi M."/>
            <person name="Nishi T."/>
            <person name="Shibahara T."/>
            <person name="Tanaka T."/>
            <person name="Ishii S."/>
            <person name="Yamamoto J."/>
            <person name="Saito K."/>
            <person name="Kawai Y."/>
            <person name="Isono Y."/>
            <person name="Nakamura Y."/>
            <person name="Nagahari K."/>
            <person name="Murakami K."/>
            <person name="Yasuda T."/>
            <person name="Iwayanagi T."/>
            <person name="Wagatsuma M."/>
            <person name="Shiratori A."/>
            <person name="Sudo H."/>
            <person name="Hosoiri T."/>
            <person name="Kaku Y."/>
            <person name="Kodaira H."/>
            <person name="Kondo H."/>
            <person name="Sugawara M."/>
            <person name="Takahashi M."/>
            <person name="Kanda K."/>
            <person name="Yokoi T."/>
            <person name="Furuya T."/>
            <person name="Kikkawa E."/>
            <person name="Omura Y."/>
            <person name="Abe K."/>
            <person name="Kamihara K."/>
            <person name="Katsuta N."/>
            <person name="Sato K."/>
            <person name="Tanikawa M."/>
            <person name="Yamazaki M."/>
            <person name="Ninomiya K."/>
            <person name="Ishibashi T."/>
            <person name="Yamashita H."/>
            <person name="Murakawa K."/>
            <person name="Fujimori K."/>
            <person name="Tanai H."/>
            <person name="Kimata M."/>
            <person name="Watanabe M."/>
            <person name="Hiraoka S."/>
            <person name="Chiba Y."/>
            <person name="Ishida S."/>
            <person name="Ono Y."/>
            <person name="Takiguchi S."/>
            <person name="Watanabe S."/>
            <person name="Yosida M."/>
            <person name="Hotuta T."/>
            <person name="Kusano J."/>
            <person name="Kanehori K."/>
            <person name="Takahashi-Fujii A."/>
            <person name="Hara H."/>
            <person name="Tanase T.-O."/>
            <person name="Nomura Y."/>
            <person name="Togiya S."/>
            <person name="Komai F."/>
            <person name="Hara R."/>
            <person name="Takeuchi K."/>
            <person name="Arita M."/>
            <person name="Imose N."/>
            <person name="Musashino K."/>
            <person name="Yuuki H."/>
            <person name="Oshima A."/>
            <person name="Sasaki N."/>
            <person name="Aotsuka S."/>
            <person name="Yoshikawa Y."/>
            <person name="Matsunawa H."/>
            <person name="Ichihara T."/>
            <person name="Shiohata N."/>
            <person name="Sano S."/>
            <person name="Moriya S."/>
            <person name="Momiyama H."/>
            <person name="Satoh N."/>
            <person name="Takami S."/>
            <person name="Terashima Y."/>
            <person name="Suzuki O."/>
            <person name="Nakagawa S."/>
            <person name="Senoh A."/>
            <person name="Mizoguchi H."/>
            <person name="Goto Y."/>
            <person name="Shimizu F."/>
            <person name="Wakebe H."/>
            <person name="Hishigaki H."/>
            <person name="Watanabe T."/>
            <person name="Sugiyama A."/>
            <person name="Takemoto M."/>
            <person name="Kawakami B."/>
            <person name="Yamazaki M."/>
            <person name="Watanabe K."/>
            <person name="Kumagai A."/>
            <person name="Itakura S."/>
            <person name="Fukuzumi Y."/>
            <person name="Fujimori Y."/>
            <person name="Komiyama M."/>
            <person name="Tashiro H."/>
            <person name="Tanigami A."/>
            <person name="Fujiwara T."/>
            <person name="Ono T."/>
            <person name="Yamada K."/>
            <person name="Fujii Y."/>
            <person name="Ozaki K."/>
            <person name="Hirao M."/>
            <person name="Ohmori Y."/>
            <person name="Kawabata A."/>
            <person name="Hikiji T."/>
            <person name="Kobatake N."/>
            <person name="Inagaki H."/>
            <person name="Ikema Y."/>
            <person name="Okamoto S."/>
            <person name="Okitani R."/>
            <person name="Kawakami T."/>
            <person name="Noguchi S."/>
            <person name="Itoh T."/>
            <person name="Shigeta K."/>
            <person name="Senba T."/>
            <person name="Matsumura K."/>
            <person name="Nakajima Y."/>
            <person name="Mizuno T."/>
            <person name="Morinaga M."/>
            <person name="Sasaki M."/>
            <person name="Togashi T."/>
            <person name="Oyama M."/>
            <person name="Hata H."/>
            <person name="Watanabe M."/>
            <person name="Komatsu T."/>
            <person name="Mizushima-Sugano J."/>
            <person name="Satoh T."/>
            <person name="Shirai Y."/>
            <person name="Takahashi Y."/>
            <person name="Nakagawa K."/>
            <person name="Okumura K."/>
            <person name="Nagase T."/>
            <person name="Nomura N."/>
            <person name="Kikuchi H."/>
            <person name="Masuho Y."/>
            <person name="Yamashita R."/>
            <person name="Nakai K."/>
            <person name="Yada T."/>
            <person name="Nakamura Y."/>
            <person name="Ohara O."/>
            <person name="Isogai T."/>
            <person name="Sugano S."/>
        </authorList>
    </citation>
    <scope>NUCLEOTIDE SEQUENCE [LARGE SCALE MRNA] (ISOFORM 1)</scope>
    <source>
        <tissue>Spleen</tissue>
    </source>
</reference>
<reference key="2">
    <citation type="journal article" date="2004" name="Genome Res.">
        <title>The status, quality, and expansion of the NIH full-length cDNA project: the Mammalian Gene Collection (MGC).</title>
        <authorList>
            <consortium name="The MGC Project Team"/>
        </authorList>
    </citation>
    <scope>NUCLEOTIDE SEQUENCE [LARGE SCALE MRNA] (ISOFORM 2)</scope>
    <source>
        <tissue>Brain</tissue>
    </source>
</reference>
<reference key="3">
    <citation type="journal article" date="2007" name="Cell Host Microbe">
        <title>Identification of human MVB12 proteins as ESCRT-I subunits that function in HIV budding.</title>
        <authorList>
            <person name="Morita E."/>
            <person name="Sandrin V."/>
            <person name="Alam S.L."/>
            <person name="Eckert D.M."/>
            <person name="Gygi S.P."/>
            <person name="Sundquist W.I."/>
        </authorList>
    </citation>
    <scope>INTERACTION WITH TSG101; VPS28; VPS37B AND VPS37C</scope>
    <scope>IDENTIFICATION IN THE ESCRT-I COMPLEX</scope>
    <scope>PHOSPHORYLATION AT SER-46; SER-101; THR-122; THR-204; THR-205 AND SER-309</scope>
    <scope>IDENTIFICATION BY MASS SPECTROMETRY</scope>
</reference>
<dbReference type="EMBL" id="AK024432">
    <property type="protein sequence ID" value="BAB15722.1"/>
    <property type="status" value="ALT_INIT"/>
    <property type="molecule type" value="mRNA"/>
</dbReference>
<dbReference type="EMBL" id="BC028675">
    <property type="protein sequence ID" value="AAH28675.1"/>
    <property type="molecule type" value="mRNA"/>
</dbReference>
<dbReference type="CCDS" id="CCDS35142.1">
    <molecule id="Q9H7P6-1"/>
</dbReference>
<dbReference type="CCDS" id="CCDS48022.1">
    <molecule id="Q9H7P6-2"/>
</dbReference>
<dbReference type="RefSeq" id="NP_001011703.1">
    <molecule id="Q9H7P6-2"/>
    <property type="nucleotide sequence ID" value="NM_001011703.3"/>
</dbReference>
<dbReference type="RefSeq" id="NP_258257.1">
    <molecule id="Q9H7P6-1"/>
    <property type="nucleotide sequence ID" value="NM_033446.3"/>
</dbReference>
<dbReference type="PDB" id="3TOW">
    <property type="method" value="X-ray"/>
    <property type="resolution" value="1.34 A"/>
    <property type="chains" value="A=47-192"/>
</dbReference>
<dbReference type="PDBsum" id="3TOW"/>
<dbReference type="SMR" id="Q9H7P6"/>
<dbReference type="BioGRID" id="124621">
    <property type="interactions" value="21"/>
</dbReference>
<dbReference type="ComplexPortal" id="CPX-7146">
    <molecule id="Q9H7P6-1"/>
    <property type="entry name" value="ESCRT-I complex, VPS37A-MVB12B variant"/>
</dbReference>
<dbReference type="ComplexPortal" id="CPX-7164">
    <molecule id="Q9H7P6-1"/>
    <property type="entry name" value="ESCRT-I complex, VPS37B-MVB12B variant"/>
</dbReference>
<dbReference type="ComplexPortal" id="CPX-7166">
    <molecule id="Q9H7P6-1"/>
    <property type="entry name" value="ESCRT-I complex, VPS37C-MVB12B variant"/>
</dbReference>
<dbReference type="ComplexPortal" id="CPX-7167">
    <molecule id="Q9H7P6-1"/>
    <property type="entry name" value="ESCRT-I complex, VPS37D-MVB12B variant"/>
</dbReference>
<dbReference type="CORUM" id="Q9H7P6"/>
<dbReference type="FunCoup" id="Q9H7P6">
    <property type="interactions" value="1212"/>
</dbReference>
<dbReference type="IntAct" id="Q9H7P6">
    <property type="interactions" value="12"/>
</dbReference>
<dbReference type="STRING" id="9606.ENSP00000354772"/>
<dbReference type="GlyGen" id="Q9H7P6">
    <property type="glycosylation" value="2 sites, 1 O-linked glycan (1 site)"/>
</dbReference>
<dbReference type="iPTMnet" id="Q9H7P6"/>
<dbReference type="MetOSite" id="Q9H7P6"/>
<dbReference type="PhosphoSitePlus" id="Q9H7P6"/>
<dbReference type="SwissPalm" id="Q9H7P6"/>
<dbReference type="BioMuta" id="MVB12B"/>
<dbReference type="DMDM" id="114149296"/>
<dbReference type="jPOST" id="Q9H7P6"/>
<dbReference type="MassIVE" id="Q9H7P6"/>
<dbReference type="PaxDb" id="9606-ENSP00000354772"/>
<dbReference type="PeptideAtlas" id="Q9H7P6"/>
<dbReference type="ProteomicsDB" id="81133">
    <molecule id="Q9H7P6-1"/>
</dbReference>
<dbReference type="ProteomicsDB" id="81134">
    <molecule id="Q9H7P6-2"/>
</dbReference>
<dbReference type="Pumba" id="Q9H7P6"/>
<dbReference type="Antibodypedia" id="56615">
    <property type="antibodies" value="22 antibodies from 10 providers"/>
</dbReference>
<dbReference type="DNASU" id="89853"/>
<dbReference type="Ensembl" id="ENST00000361171.8">
    <molecule id="Q9H7P6-1"/>
    <property type="protein sequence ID" value="ENSP00000354772.3"/>
    <property type="gene ID" value="ENSG00000196814.15"/>
</dbReference>
<dbReference type="Ensembl" id="ENST00000489637.3">
    <molecule id="Q9H7P6-2"/>
    <property type="protein sequence ID" value="ENSP00000485994.1"/>
    <property type="gene ID" value="ENSG00000196814.15"/>
</dbReference>
<dbReference type="GeneID" id="89853"/>
<dbReference type="KEGG" id="hsa:89853"/>
<dbReference type="MANE-Select" id="ENST00000361171.8">
    <property type="protein sequence ID" value="ENSP00000354772.3"/>
    <property type="RefSeq nucleotide sequence ID" value="NM_033446.3"/>
    <property type="RefSeq protein sequence ID" value="NP_258257.1"/>
</dbReference>
<dbReference type="UCSC" id="uc004bqh.3">
    <molecule id="Q9H7P6-1"/>
    <property type="organism name" value="human"/>
</dbReference>
<dbReference type="AGR" id="HGNC:23368"/>
<dbReference type="CTD" id="89853"/>
<dbReference type="DisGeNET" id="89853"/>
<dbReference type="GeneCards" id="MVB12B"/>
<dbReference type="HGNC" id="HGNC:23368">
    <property type="gene designation" value="MVB12B"/>
</dbReference>
<dbReference type="HPA" id="ENSG00000196814">
    <property type="expression patterns" value="Tissue enriched (brain)"/>
</dbReference>
<dbReference type="neXtProt" id="NX_Q9H7P6"/>
<dbReference type="OpenTargets" id="ENSG00000196814"/>
<dbReference type="PharmGKB" id="PA162385827"/>
<dbReference type="VEuPathDB" id="HostDB:ENSG00000196814"/>
<dbReference type="eggNOG" id="KOG4000">
    <property type="taxonomic scope" value="Eukaryota"/>
</dbReference>
<dbReference type="GeneTree" id="ENSGT00940000155945"/>
<dbReference type="HOGENOM" id="CLU_064823_1_0_1"/>
<dbReference type="InParanoid" id="Q9H7P6"/>
<dbReference type="OMA" id="CFCLKRG"/>
<dbReference type="OrthoDB" id="6021306at2759"/>
<dbReference type="PAN-GO" id="Q9H7P6">
    <property type="GO annotations" value="5 GO annotations based on evolutionary models"/>
</dbReference>
<dbReference type="PhylomeDB" id="Q9H7P6"/>
<dbReference type="TreeFam" id="TF314477"/>
<dbReference type="PathwayCommons" id="Q9H7P6"/>
<dbReference type="Reactome" id="R-HSA-162588">
    <property type="pathway name" value="Budding and maturation of HIV virion"/>
</dbReference>
<dbReference type="Reactome" id="R-HSA-174490">
    <property type="pathway name" value="Membrane binding and targetting of GAG proteins"/>
</dbReference>
<dbReference type="Reactome" id="R-HSA-917729">
    <property type="pathway name" value="Endosomal Sorting Complex Required For Transport (ESCRT)"/>
</dbReference>
<dbReference type="Reactome" id="R-HSA-9610379">
    <property type="pathway name" value="HCMV Late Events"/>
</dbReference>
<dbReference type="Reactome" id="R-HSA-9615710">
    <property type="pathway name" value="Late endosomal microautophagy"/>
</dbReference>
<dbReference type="SignaLink" id="Q9H7P6"/>
<dbReference type="BioGRID-ORCS" id="89853">
    <property type="hits" value="10 hits in 1139 CRISPR screens"/>
</dbReference>
<dbReference type="ChiTaRS" id="MVB12B">
    <property type="organism name" value="human"/>
</dbReference>
<dbReference type="EvolutionaryTrace" id="Q9H7P6"/>
<dbReference type="GenomeRNAi" id="89853"/>
<dbReference type="Pharos" id="Q9H7P6">
    <property type="development level" value="Tbio"/>
</dbReference>
<dbReference type="PRO" id="PR:Q9H7P6"/>
<dbReference type="Proteomes" id="UP000005640">
    <property type="component" value="Chromosome 9"/>
</dbReference>
<dbReference type="RNAct" id="Q9H7P6">
    <property type="molecule type" value="protein"/>
</dbReference>
<dbReference type="Bgee" id="ENSG00000196814">
    <property type="expression patterns" value="Expressed in C1 segment of cervical spinal cord and 147 other cell types or tissues"/>
</dbReference>
<dbReference type="ExpressionAtlas" id="Q9H7P6">
    <property type="expression patterns" value="baseline and differential"/>
</dbReference>
<dbReference type="GO" id="GO:0005829">
    <property type="term" value="C:cytosol"/>
    <property type="evidence" value="ECO:0000314"/>
    <property type="project" value="UniProtKB"/>
</dbReference>
<dbReference type="GO" id="GO:0005769">
    <property type="term" value="C:early endosome"/>
    <property type="evidence" value="ECO:0000314"/>
    <property type="project" value="UniProtKB"/>
</dbReference>
<dbReference type="GO" id="GO:0010008">
    <property type="term" value="C:endosome membrane"/>
    <property type="evidence" value="ECO:0000304"/>
    <property type="project" value="Reactome"/>
</dbReference>
<dbReference type="GO" id="GO:0000813">
    <property type="term" value="C:ESCRT I complex"/>
    <property type="evidence" value="ECO:0000314"/>
    <property type="project" value="UniProtKB"/>
</dbReference>
<dbReference type="GO" id="GO:0070062">
    <property type="term" value="C:extracellular exosome"/>
    <property type="evidence" value="ECO:0007005"/>
    <property type="project" value="UniProtKB"/>
</dbReference>
<dbReference type="GO" id="GO:0005770">
    <property type="term" value="C:late endosome"/>
    <property type="evidence" value="ECO:0000314"/>
    <property type="project" value="UniProtKB"/>
</dbReference>
<dbReference type="GO" id="GO:0031902">
    <property type="term" value="C:late endosome membrane"/>
    <property type="evidence" value="ECO:0007669"/>
    <property type="project" value="UniProtKB-SubCell"/>
</dbReference>
<dbReference type="GO" id="GO:0005634">
    <property type="term" value="C:nucleus"/>
    <property type="evidence" value="ECO:0000314"/>
    <property type="project" value="UniProtKB"/>
</dbReference>
<dbReference type="GO" id="GO:0005886">
    <property type="term" value="C:plasma membrane"/>
    <property type="evidence" value="ECO:0000314"/>
    <property type="project" value="UniProtKB"/>
</dbReference>
<dbReference type="GO" id="GO:0031982">
    <property type="term" value="C:vesicle"/>
    <property type="evidence" value="ECO:0000314"/>
    <property type="project" value="UniProtKB"/>
</dbReference>
<dbReference type="GO" id="GO:0008289">
    <property type="term" value="F:lipid binding"/>
    <property type="evidence" value="ECO:0000315"/>
    <property type="project" value="UniProtKB"/>
</dbReference>
<dbReference type="GO" id="GO:0090148">
    <property type="term" value="P:membrane fission"/>
    <property type="evidence" value="ECO:0000303"/>
    <property type="project" value="ComplexPortal"/>
</dbReference>
<dbReference type="GO" id="GO:0036258">
    <property type="term" value="P:multivesicular body assembly"/>
    <property type="evidence" value="ECO:0000303"/>
    <property type="project" value="ComplexPortal"/>
</dbReference>
<dbReference type="GO" id="GO:0015031">
    <property type="term" value="P:protein transport"/>
    <property type="evidence" value="ECO:0007669"/>
    <property type="project" value="UniProtKB-KW"/>
</dbReference>
<dbReference type="GO" id="GO:0043328">
    <property type="term" value="P:protein transport to vacuole involved in ubiquitin-dependent protein catabolic process via the multivesicular body sorting pathway"/>
    <property type="evidence" value="ECO:0000303"/>
    <property type="project" value="ComplexPortal"/>
</dbReference>
<dbReference type="GO" id="GO:0042058">
    <property type="term" value="P:regulation of epidermal growth factor receptor signaling pathway"/>
    <property type="evidence" value="ECO:0000315"/>
    <property type="project" value="UniProtKB"/>
</dbReference>
<dbReference type="GO" id="GO:0043162">
    <property type="term" value="P:ubiquitin-dependent protein catabolic process via the multivesicular body sorting pathway"/>
    <property type="evidence" value="ECO:0000305"/>
    <property type="project" value="UniProtKB"/>
</dbReference>
<dbReference type="GO" id="GO:0046755">
    <property type="term" value="P:viral budding"/>
    <property type="evidence" value="ECO:0000315"/>
    <property type="project" value="UniProtKB"/>
</dbReference>
<dbReference type="GO" id="GO:0019075">
    <property type="term" value="P:virus maturation"/>
    <property type="evidence" value="ECO:0000315"/>
    <property type="project" value="UniProtKB"/>
</dbReference>
<dbReference type="FunFam" id="2.100.10.50:FF:000002">
    <property type="entry name" value="Multivesicular body subunit 12B"/>
    <property type="match status" value="1"/>
</dbReference>
<dbReference type="Gene3D" id="2.100.10.50">
    <property type="match status" value="1"/>
</dbReference>
<dbReference type="InterPro" id="IPR023341">
    <property type="entry name" value="MABP"/>
</dbReference>
<dbReference type="InterPro" id="IPR018798">
    <property type="entry name" value="MVB12A/B"/>
</dbReference>
<dbReference type="InterPro" id="IPR040297">
    <property type="entry name" value="MVB12B"/>
</dbReference>
<dbReference type="InterPro" id="IPR023340">
    <property type="entry name" value="UMA"/>
</dbReference>
<dbReference type="PANTHER" id="PTHR31547">
    <property type="entry name" value="MULTIVESICULAR BODY SUBUNIT 12B"/>
    <property type="match status" value="1"/>
</dbReference>
<dbReference type="PANTHER" id="PTHR31547:SF1">
    <property type="entry name" value="MULTIVESICULAR BODY SUBUNIT 12B"/>
    <property type="match status" value="1"/>
</dbReference>
<dbReference type="Pfam" id="PF10240">
    <property type="entry name" value="DUF2464"/>
    <property type="match status" value="1"/>
</dbReference>
<dbReference type="PROSITE" id="PS51498">
    <property type="entry name" value="MABP"/>
    <property type="match status" value="1"/>
</dbReference>
<dbReference type="PROSITE" id="PS51497">
    <property type="entry name" value="UMA"/>
    <property type="match status" value="1"/>
</dbReference>
<gene>
    <name type="primary">MVB12B</name>
    <name type="synonym">C9orf28</name>
    <name type="synonym">FAM125B</name>
</gene>
<protein>
    <recommendedName>
        <fullName>Multivesicular body subunit 12B</fullName>
    </recommendedName>
    <alternativeName>
        <fullName>ESCRT-I complex subunit MVB12B</fullName>
    </alternativeName>
    <alternativeName>
        <fullName>Protein FAM125B</fullName>
    </alternativeName>
</protein>